<proteinExistence type="inferred from homology"/>
<reference key="1">
    <citation type="journal article" date="2005" name="J. Bacteriol.">
        <title>Insights on evolution of virulence and resistance from the complete genome analysis of an early methicillin-resistant Staphylococcus aureus strain and a biofilm-producing methicillin-resistant Staphylococcus epidermidis strain.</title>
        <authorList>
            <person name="Gill S.R."/>
            <person name="Fouts D.E."/>
            <person name="Archer G.L."/>
            <person name="Mongodin E.F."/>
            <person name="DeBoy R.T."/>
            <person name="Ravel J."/>
            <person name="Paulsen I.T."/>
            <person name="Kolonay J.F."/>
            <person name="Brinkac L.M."/>
            <person name="Beanan M.J."/>
            <person name="Dodson R.J."/>
            <person name="Daugherty S.C."/>
            <person name="Madupu R."/>
            <person name="Angiuoli S.V."/>
            <person name="Durkin A.S."/>
            <person name="Haft D.H."/>
            <person name="Vamathevan J.J."/>
            <person name="Khouri H."/>
            <person name="Utterback T.R."/>
            <person name="Lee C."/>
            <person name="Dimitrov G."/>
            <person name="Jiang L."/>
            <person name="Qin H."/>
            <person name="Weidman J."/>
            <person name="Tran K."/>
            <person name="Kang K.H."/>
            <person name="Hance I.R."/>
            <person name="Nelson K.E."/>
            <person name="Fraser C.M."/>
        </authorList>
    </citation>
    <scope>NUCLEOTIDE SEQUENCE [LARGE SCALE GENOMIC DNA]</scope>
    <source>
        <strain>ATCC 35984 / DSM 28319 / BCRC 17069 / CCUG 31568 / BM 3577 / RP62A</strain>
    </source>
</reference>
<evidence type="ECO:0000250" key="1"/>
<evidence type="ECO:0000255" key="2"/>
<evidence type="ECO:0000305" key="3"/>
<name>TCAA_STAEQ</name>
<feature type="chain" id="PRO_0000333174" description="Membrane-associated protein TcaA">
    <location>
        <begin position="1"/>
        <end position="462"/>
    </location>
</feature>
<feature type="topological domain" description="Cytoplasmic" evidence="2">
    <location>
        <begin position="1"/>
        <end position="52"/>
    </location>
</feature>
<feature type="transmembrane region" description="Helical" evidence="2">
    <location>
        <begin position="53"/>
        <end position="73"/>
    </location>
</feature>
<feature type="topological domain" description="Extracellular" evidence="2">
    <location>
        <begin position="74"/>
        <end position="462"/>
    </location>
</feature>
<feature type="zinc finger region" description="C4-type" evidence="2">
    <location>
        <begin position="4"/>
        <end position="21"/>
    </location>
</feature>
<organism>
    <name type="scientific">Staphylococcus epidermidis (strain ATCC 35984 / DSM 28319 / BCRC 17069 / CCUG 31568 / BM 3577 / RP62A)</name>
    <dbReference type="NCBI Taxonomy" id="176279"/>
    <lineage>
        <taxon>Bacteria</taxon>
        <taxon>Bacillati</taxon>
        <taxon>Bacillota</taxon>
        <taxon>Bacilli</taxon>
        <taxon>Bacillales</taxon>
        <taxon>Staphylococcaceae</taxon>
        <taxon>Staphylococcus</taxon>
    </lineage>
</organism>
<protein>
    <recommendedName>
        <fullName>Membrane-associated protein TcaA</fullName>
    </recommendedName>
</protein>
<gene>
    <name type="primary">tcaA</name>
    <name type="ordered locus">SERP1948</name>
</gene>
<accession>Q5HLN7</accession>
<comment type="function">
    <text evidence="1">Plays a major role in decreasing resistance to glycopeptide antibiotics.</text>
</comment>
<comment type="subcellular location">
    <subcellularLocation>
        <location evidence="1">Cell membrane</location>
        <topology evidence="1">Single-pass membrane protein</topology>
    </subcellularLocation>
</comment>
<comment type="similarity">
    <text evidence="3">Belongs to the TcaA family.</text>
</comment>
<sequence>MSQCPNCGHQVKDDTSQCPNCGQLLTKKKKRKIKDQSSQSSNENSTNIRLRKIVPIGISVFILILIIVLFFLLRNYNSPNAQAKILVNAVDNNDSQKVATLLSTKNKKVDDVEAQQYINYVKKEVGIKKYIRDINNTVDKLNKSNSSVASYIQTKSGQDVLKISKNGTKYLIFDNMSFTAPTKKPIIKPKVETKYEFRTSGKKKTVIAEANKNTPLGEFIPGTYHLPAKKITENGTFNGHLNFDFRESHSETVDVAEDYDQSFINIKFKGANKLSDKSEKVQINDRTFTYSHSKEFGPYPKTKDITISATGKAKGKTFSSETKTISADDLKDNTKVTLEFDSDKINSYVEKKEKEENSLKNKLTEFFTGYATAMNSAFNMNDFNFISSYFKKNSSIYTSMKSNFQNRTNVTMISPQVLSVHRNGHTVRTTIQHIDHIGNYINKDYELEIDNDDSNMQLVKEL</sequence>
<dbReference type="EMBL" id="CP000029">
    <property type="protein sequence ID" value="AAW52830.1"/>
    <property type="molecule type" value="Genomic_DNA"/>
</dbReference>
<dbReference type="RefSeq" id="WP_002470820.1">
    <property type="nucleotide sequence ID" value="NC_002976.3"/>
</dbReference>
<dbReference type="STRING" id="176279.SERP1948"/>
<dbReference type="KEGG" id="ser:SERP1948"/>
<dbReference type="eggNOG" id="COG4640">
    <property type="taxonomic scope" value="Bacteria"/>
</dbReference>
<dbReference type="HOGENOM" id="CLU_047245_0_0_9"/>
<dbReference type="Proteomes" id="UP000000531">
    <property type="component" value="Chromosome"/>
</dbReference>
<dbReference type="GO" id="GO:0005886">
    <property type="term" value="C:plasma membrane"/>
    <property type="evidence" value="ECO:0007669"/>
    <property type="project" value="UniProtKB-SubCell"/>
</dbReference>
<dbReference type="GO" id="GO:0008270">
    <property type="term" value="F:zinc ion binding"/>
    <property type="evidence" value="ECO:0007669"/>
    <property type="project" value="UniProtKB-KW"/>
</dbReference>
<dbReference type="GO" id="GO:0046677">
    <property type="term" value="P:response to antibiotic"/>
    <property type="evidence" value="ECO:0007669"/>
    <property type="project" value="UniProtKB-KW"/>
</dbReference>
<dbReference type="InterPro" id="IPR023599">
    <property type="entry name" value="Mem_prot_TcaA"/>
</dbReference>
<dbReference type="InterPro" id="IPR054529">
    <property type="entry name" value="TcaA_2nd"/>
</dbReference>
<dbReference type="InterPro" id="IPR054530">
    <property type="entry name" value="TcaA_4th"/>
</dbReference>
<dbReference type="InterPro" id="IPR026870">
    <property type="entry name" value="Zinc_ribbon_dom"/>
</dbReference>
<dbReference type="PANTHER" id="PTHR40038">
    <property type="entry name" value="MEMBRANE-ASSOCIATED PROTEIN TCAA"/>
    <property type="match status" value="1"/>
</dbReference>
<dbReference type="PANTHER" id="PTHR40038:SF1">
    <property type="entry name" value="MEMBRANE-ASSOCIATED PROTEIN TCAA"/>
    <property type="match status" value="1"/>
</dbReference>
<dbReference type="Pfam" id="PF22813">
    <property type="entry name" value="TcaA_2nd"/>
    <property type="match status" value="1"/>
</dbReference>
<dbReference type="Pfam" id="PF22820">
    <property type="entry name" value="TcaA_3rd_4th"/>
    <property type="match status" value="1"/>
</dbReference>
<dbReference type="Pfam" id="PF22819">
    <property type="entry name" value="TcaA_5th"/>
    <property type="match status" value="1"/>
</dbReference>
<dbReference type="Pfam" id="PF13240">
    <property type="entry name" value="Zn_Ribbon_1"/>
    <property type="match status" value="1"/>
</dbReference>
<dbReference type="PIRSF" id="PIRSF032522">
    <property type="entry name" value="TcaA"/>
    <property type="match status" value="1"/>
</dbReference>
<keyword id="KW-0046">Antibiotic resistance</keyword>
<keyword id="KW-1003">Cell membrane</keyword>
<keyword id="KW-0472">Membrane</keyword>
<keyword id="KW-0479">Metal-binding</keyword>
<keyword id="KW-1185">Reference proteome</keyword>
<keyword id="KW-0812">Transmembrane</keyword>
<keyword id="KW-1133">Transmembrane helix</keyword>
<keyword id="KW-0862">Zinc</keyword>
<keyword id="KW-0863">Zinc-finger</keyword>